<feature type="chain" id="PRO_1000015091" description="Small ribosomal subunit protein uS10">
    <location>
        <begin position="1"/>
        <end position="106"/>
    </location>
</feature>
<protein>
    <recommendedName>
        <fullName evidence="1">Small ribosomal subunit protein uS10</fullName>
    </recommendedName>
    <alternativeName>
        <fullName evidence="2">30S ribosomal protein S10</fullName>
    </alternativeName>
</protein>
<sequence>MALAARRKVRIRLYGTNPADVDQVAREIVDLAKKMGVQVRGPIPLPTRRLVVTVRRAPSGQGYHTYDHWEMRISKRLIDIEASERVLRRLMTIRVPDTVKIELQLI</sequence>
<reference key="1">
    <citation type="submission" date="2007-04" db="EMBL/GenBank/DDBJ databases">
        <title>Complete sequence of Pyrobaculum arsenaticum DSM 13514.</title>
        <authorList>
            <consortium name="US DOE Joint Genome Institute"/>
            <person name="Copeland A."/>
            <person name="Lucas S."/>
            <person name="Lapidus A."/>
            <person name="Barry K."/>
            <person name="Glavina del Rio T."/>
            <person name="Dalin E."/>
            <person name="Tice H."/>
            <person name="Pitluck S."/>
            <person name="Chain P."/>
            <person name="Malfatti S."/>
            <person name="Shin M."/>
            <person name="Vergez L."/>
            <person name="Schmutz J."/>
            <person name="Larimer F."/>
            <person name="Land M."/>
            <person name="Hauser L."/>
            <person name="Kyrpides N."/>
            <person name="Mikhailova N."/>
            <person name="Cozen A.E."/>
            <person name="Fitz-Gibbon S.T."/>
            <person name="House C.H."/>
            <person name="Saltikov C."/>
            <person name="Lowe T.M."/>
            <person name="Richardson P."/>
        </authorList>
    </citation>
    <scope>NUCLEOTIDE SEQUENCE [LARGE SCALE GENOMIC DNA]</scope>
    <source>
        <strain>ATCC 700994 / DSM 13514 / JCM 11321 / PZ6</strain>
    </source>
</reference>
<organism>
    <name type="scientific">Pyrobaculum arsenaticum (strain DSM 13514 / JCM 11321 / PZ6)</name>
    <dbReference type="NCBI Taxonomy" id="340102"/>
    <lineage>
        <taxon>Archaea</taxon>
        <taxon>Thermoproteota</taxon>
        <taxon>Thermoprotei</taxon>
        <taxon>Thermoproteales</taxon>
        <taxon>Thermoproteaceae</taxon>
        <taxon>Pyrobaculum</taxon>
    </lineage>
</organism>
<proteinExistence type="inferred from homology"/>
<evidence type="ECO:0000255" key="1">
    <source>
        <dbReference type="HAMAP-Rule" id="MF_00508"/>
    </source>
</evidence>
<evidence type="ECO:0000305" key="2"/>
<dbReference type="EMBL" id="CP000660">
    <property type="protein sequence ID" value="ABP50567.1"/>
    <property type="molecule type" value="Genomic_DNA"/>
</dbReference>
<dbReference type="SMR" id="A4WJK0"/>
<dbReference type="STRING" id="340102.Pars_0987"/>
<dbReference type="KEGG" id="pas:Pars_0987"/>
<dbReference type="HOGENOM" id="CLU_122625_0_1_2"/>
<dbReference type="OrthoDB" id="371736at2157"/>
<dbReference type="PhylomeDB" id="A4WJK0"/>
<dbReference type="Proteomes" id="UP000001567">
    <property type="component" value="Chromosome"/>
</dbReference>
<dbReference type="GO" id="GO:0015935">
    <property type="term" value="C:small ribosomal subunit"/>
    <property type="evidence" value="ECO:0007669"/>
    <property type="project" value="InterPro"/>
</dbReference>
<dbReference type="GO" id="GO:0003735">
    <property type="term" value="F:structural constituent of ribosome"/>
    <property type="evidence" value="ECO:0007669"/>
    <property type="project" value="InterPro"/>
</dbReference>
<dbReference type="GO" id="GO:0000049">
    <property type="term" value="F:tRNA binding"/>
    <property type="evidence" value="ECO:0007669"/>
    <property type="project" value="UniProtKB-UniRule"/>
</dbReference>
<dbReference type="GO" id="GO:0006412">
    <property type="term" value="P:translation"/>
    <property type="evidence" value="ECO:0007669"/>
    <property type="project" value="UniProtKB-UniRule"/>
</dbReference>
<dbReference type="FunFam" id="3.30.70.600:FF:000004">
    <property type="entry name" value="30S ribosomal protein S10"/>
    <property type="match status" value="1"/>
</dbReference>
<dbReference type="Gene3D" id="3.30.70.600">
    <property type="entry name" value="Ribosomal protein S10 domain"/>
    <property type="match status" value="1"/>
</dbReference>
<dbReference type="HAMAP" id="MF_00508">
    <property type="entry name" value="Ribosomal_uS10"/>
    <property type="match status" value="1"/>
</dbReference>
<dbReference type="InterPro" id="IPR001848">
    <property type="entry name" value="Ribosomal_uS10"/>
</dbReference>
<dbReference type="InterPro" id="IPR018268">
    <property type="entry name" value="Ribosomal_uS10_CS"/>
</dbReference>
<dbReference type="InterPro" id="IPR027486">
    <property type="entry name" value="Ribosomal_uS10_dom"/>
</dbReference>
<dbReference type="InterPro" id="IPR036838">
    <property type="entry name" value="Ribosomal_uS10_dom_sf"/>
</dbReference>
<dbReference type="InterPro" id="IPR005729">
    <property type="entry name" value="Ribosomal_uS10_euk/arc"/>
</dbReference>
<dbReference type="NCBIfam" id="TIGR01046">
    <property type="entry name" value="uS10_euk_arch"/>
    <property type="match status" value="1"/>
</dbReference>
<dbReference type="PANTHER" id="PTHR11700">
    <property type="entry name" value="30S RIBOSOMAL PROTEIN S10 FAMILY MEMBER"/>
    <property type="match status" value="1"/>
</dbReference>
<dbReference type="Pfam" id="PF00338">
    <property type="entry name" value="Ribosomal_S10"/>
    <property type="match status" value="1"/>
</dbReference>
<dbReference type="PRINTS" id="PR00971">
    <property type="entry name" value="RIBOSOMALS10"/>
</dbReference>
<dbReference type="SMART" id="SM01403">
    <property type="entry name" value="Ribosomal_S10"/>
    <property type="match status" value="1"/>
</dbReference>
<dbReference type="SUPFAM" id="SSF54999">
    <property type="entry name" value="Ribosomal protein S10"/>
    <property type="match status" value="1"/>
</dbReference>
<dbReference type="PROSITE" id="PS00361">
    <property type="entry name" value="RIBOSOMAL_S10"/>
    <property type="match status" value="1"/>
</dbReference>
<accession>A4WJK0</accession>
<keyword id="KW-0687">Ribonucleoprotein</keyword>
<keyword id="KW-0689">Ribosomal protein</keyword>
<name>RS10_PYRAR</name>
<gene>
    <name evidence="1" type="primary">rps10</name>
    <name type="ordered locus">Pars_0987</name>
</gene>
<comment type="function">
    <text evidence="1">Involved in the binding of tRNA to the ribosomes.</text>
</comment>
<comment type="subunit">
    <text evidence="1">Part of the 30S ribosomal subunit.</text>
</comment>
<comment type="similarity">
    <text evidence="1">Belongs to the universal ribosomal protein uS10 family.</text>
</comment>